<gene>
    <name evidence="12" type="primary">TFAP2D</name>
    <name evidence="8" type="synonym">TFAP2BL1</name>
</gene>
<protein>
    <recommendedName>
        <fullName>Transcription factor AP-2-delta</fullName>
        <shortName>AP2-delta</shortName>
    </recommendedName>
    <alternativeName>
        <fullName>Activating enhancer-binding protein 2-delta</fullName>
    </alternativeName>
    <alternativeName>
        <fullName>Transcription factor AP-2-beta-like 1</fullName>
    </alternativeName>
</protein>
<evidence type="ECO:0000250" key="1"/>
<evidence type="ECO:0000250" key="2">
    <source>
        <dbReference type="UniProtKB" id="P05549"/>
    </source>
</evidence>
<evidence type="ECO:0000250" key="3">
    <source>
        <dbReference type="UniProtKB" id="Q91ZK0"/>
    </source>
</evidence>
<evidence type="ECO:0000255" key="4"/>
<evidence type="ECO:0000256" key="5">
    <source>
        <dbReference type="SAM" id="MobiDB-lite"/>
    </source>
</evidence>
<evidence type="ECO:0000269" key="6">
    <source>
    </source>
</evidence>
<evidence type="ECO:0000269" key="7">
    <source>
    </source>
</evidence>
<evidence type="ECO:0000303" key="8">
    <source>
    </source>
</evidence>
<evidence type="ECO:0000305" key="9"/>
<evidence type="ECO:0000312" key="10">
    <source>
        <dbReference type="EMBL" id="AAK16926.1"/>
    </source>
</evidence>
<evidence type="ECO:0000312" key="11">
    <source>
        <dbReference type="EMBL" id="AL031224"/>
    </source>
</evidence>
<evidence type="ECO:0000312" key="12">
    <source>
        <dbReference type="HGNC" id="HGNC:15581"/>
    </source>
</evidence>
<accession>Q7Z6R9</accession>
<accession>Q8IWX0</accession>
<comment type="function">
    <text evidence="1">Sequence-specific DNA-binding protein that interacts with inducible viral and cellular enhancer elements to regulate transcription of selected genes. AP-2 factors bind to the consensus sequence 5'-GCCNNNGGC-3' and activate genes involved in a large spectrum of important biological functions including proper eye, face, body wall, limb and neural tube development. They also suppress a number of genes including MCAM/MUC18, C/EBP alpha and MYC (By similarity).</text>
</comment>
<comment type="subunit">
    <text evidence="3">Binds DNA as a dimer. Can form homodimers or heterodimers with other AP-2 family members (By similarity).</text>
</comment>
<comment type="interaction">
    <interactant intactId="EBI-11952651">
        <id>Q7Z6R9</id>
    </interactant>
    <interactant intactId="EBI-12006944">
        <id>O43184-4</id>
        <label>ADAM12</label>
    </interactant>
    <organismsDiffer>false</organismsDiffer>
    <experiments>3</experiments>
</comment>
<comment type="interaction">
    <interactant intactId="EBI-11952651">
        <id>Q7Z6R9</id>
    </interactant>
    <interactant intactId="EBI-10173507">
        <id>Q6UY14-3</id>
        <label>ADAMTSL4</label>
    </interactant>
    <organismsDiffer>false</organismsDiffer>
    <experiments>3</experiments>
</comment>
<comment type="interaction">
    <interactant intactId="EBI-11952651">
        <id>Q7Z6R9</id>
    </interactant>
    <interactant intactId="EBI-712648">
        <id>O95994</id>
        <label>AGR2</label>
    </interactant>
    <organismsDiffer>false</organismsDiffer>
    <experiments>3</experiments>
</comment>
<comment type="interaction">
    <interactant intactId="EBI-11952651">
        <id>Q7Z6R9</id>
    </interactant>
    <interactant intactId="EBI-357530">
        <id>Q9ULX6</id>
        <label>AKAP8L</label>
    </interactant>
    <organismsDiffer>false</organismsDiffer>
    <experiments>3</experiments>
</comment>
<comment type="interaction">
    <interactant intactId="EBI-11952651">
        <id>Q7Z6R9</id>
    </interactant>
    <interactant intactId="EBI-2949658">
        <id>O95429</id>
        <label>BAG4</label>
    </interactant>
    <organismsDiffer>false</organismsDiffer>
    <experiments>5</experiments>
</comment>
<comment type="interaction">
    <interactant intactId="EBI-11952651">
        <id>Q7Z6R9</id>
    </interactant>
    <interactant intactId="EBI-1383687">
        <id>Q9UQM7</id>
        <label>CAMK2A</label>
    </interactant>
    <organismsDiffer>false</organismsDiffer>
    <experiments>3</experiments>
</comment>
<comment type="interaction">
    <interactant intactId="EBI-11952651">
        <id>Q7Z6R9</id>
    </interactant>
    <interactant intactId="EBI-3866279">
        <id>Q9BWT7</id>
        <label>CARD10</label>
    </interactant>
    <organismsDiffer>false</organismsDiffer>
    <experiments>3</experiments>
</comment>
<comment type="interaction">
    <interactant intactId="EBI-11952651">
        <id>Q7Z6R9</id>
    </interactant>
    <interactant intactId="EBI-2802782">
        <id>Q6NVV7</id>
        <label>CDPF1</label>
    </interactant>
    <organismsDiffer>false</organismsDiffer>
    <experiments>3</experiments>
</comment>
<comment type="interaction">
    <interactant intactId="EBI-11952651">
        <id>Q7Z6R9</id>
    </interactant>
    <interactant intactId="EBI-742887">
        <id>Q8TAP6</id>
        <label>CEP76</label>
    </interactant>
    <organismsDiffer>false</organismsDiffer>
    <experiments>3</experiments>
</comment>
<comment type="interaction">
    <interactant intactId="EBI-11952651">
        <id>Q7Z6R9</id>
    </interactant>
    <interactant intactId="EBI-12160437">
        <id>A8MTA8-2</id>
        <label>CIMIP2B</label>
    </interactant>
    <organismsDiffer>false</organismsDiffer>
    <experiments>3</experiments>
</comment>
<comment type="interaction">
    <interactant intactId="EBI-11952651">
        <id>Q7Z6R9</id>
    </interactant>
    <interactant intactId="EBI-12819063">
        <id>Q9BYD5</id>
        <label>CNFN</label>
    </interactant>
    <organismsDiffer>false</organismsDiffer>
    <experiments>3</experiments>
</comment>
<comment type="interaction">
    <interactant intactId="EBI-11952651">
        <id>Q7Z6R9</id>
    </interactant>
    <interactant intactId="EBI-348169">
        <id>P67870</id>
        <label>CSNK2B</label>
    </interactant>
    <organismsDiffer>false</organismsDiffer>
    <experiments>3</experiments>
</comment>
<comment type="interaction">
    <interactant intactId="EBI-11952651">
        <id>Q7Z6R9</id>
    </interactant>
    <interactant intactId="EBI-3867333">
        <id>A8MQ03</id>
        <label>CYSRT1</label>
    </interactant>
    <organismsDiffer>false</organismsDiffer>
    <experiments>3</experiments>
</comment>
<comment type="interaction">
    <interactant intactId="EBI-11952651">
        <id>Q7Z6R9</id>
    </interactant>
    <interactant intactId="EBI-11978259">
        <id>Q92567-2</id>
        <label>FAM168A</label>
    </interactant>
    <organismsDiffer>false</organismsDiffer>
    <experiments>3</experiments>
</comment>
<comment type="interaction">
    <interactant intactId="EBI-11952651">
        <id>Q7Z6R9</id>
    </interactant>
    <interactant intactId="EBI-11978177">
        <id>Q96NT3-2</id>
        <label>GUCD1</label>
    </interactant>
    <organismsDiffer>false</organismsDiffer>
    <experiments>5</experiments>
</comment>
<comment type="interaction">
    <interactant intactId="EBI-11952651">
        <id>Q7Z6R9</id>
    </interactant>
    <interactant intactId="EBI-740553">
        <id>P13807</id>
        <label>GYS1</label>
    </interactant>
    <organismsDiffer>false</organismsDiffer>
    <experiments>3</experiments>
</comment>
<comment type="interaction">
    <interactant intactId="EBI-11952651">
        <id>Q7Z6R9</id>
    </interactant>
    <interactant intactId="EBI-17244356">
        <id>P35452-2</id>
        <label>HOXD12</label>
    </interactant>
    <organismsDiffer>false</organismsDiffer>
    <experiments>3</experiments>
</comment>
<comment type="interaction">
    <interactant intactId="EBI-11952651">
        <id>Q7Z6R9</id>
    </interactant>
    <interactant intactId="EBI-747204">
        <id>Q9UKT9</id>
        <label>IKZF3</label>
    </interactant>
    <organismsDiffer>false</organismsDiffer>
    <experiments>3</experiments>
</comment>
<comment type="interaction">
    <interactant intactId="EBI-11952651">
        <id>Q7Z6R9</id>
    </interactant>
    <interactant intactId="EBI-6509505">
        <id>Q0VD86</id>
        <label>INCA1</label>
    </interactant>
    <organismsDiffer>false</organismsDiffer>
    <experiments>5</experiments>
</comment>
<comment type="interaction">
    <interactant intactId="EBI-11952651">
        <id>Q7Z6R9</id>
    </interactant>
    <interactant intactId="EBI-10693436">
        <id>Q9BS75</id>
        <label>KLHL20</label>
    </interactant>
    <organismsDiffer>false</organismsDiffer>
    <experiments>3</experiments>
</comment>
<comment type="interaction">
    <interactant intactId="EBI-11952651">
        <id>Q7Z6R9</id>
    </interactant>
    <interactant intactId="EBI-10981970">
        <id>Q5T749</id>
        <label>KPRP</label>
    </interactant>
    <organismsDiffer>false</organismsDiffer>
    <experiments>3</experiments>
</comment>
<comment type="interaction">
    <interactant intactId="EBI-11952651">
        <id>Q7Z6R9</id>
    </interactant>
    <interactant intactId="EBI-948001">
        <id>Q15323</id>
        <label>KRT31</label>
    </interactant>
    <organismsDiffer>false</organismsDiffer>
    <experiments>3</experiments>
</comment>
<comment type="interaction">
    <interactant intactId="EBI-11952651">
        <id>Q7Z6R9</id>
    </interactant>
    <interactant intactId="EBI-1047093">
        <id>O76011</id>
        <label>KRT34</label>
    </interactant>
    <organismsDiffer>false</organismsDiffer>
    <experiments>3</experiments>
</comment>
<comment type="interaction">
    <interactant intactId="EBI-11952651">
        <id>Q7Z6R9</id>
    </interactant>
    <interactant intactId="EBI-11959885">
        <id>Q07627</id>
        <label>KRTAP1-1</label>
    </interactant>
    <organismsDiffer>false</organismsDiffer>
    <experiments>3</experiments>
</comment>
<comment type="interaction">
    <interactant intactId="EBI-11952651">
        <id>Q7Z6R9</id>
    </interactant>
    <interactant intactId="EBI-11749135">
        <id>Q8IUG1</id>
        <label>KRTAP1-3</label>
    </interactant>
    <organismsDiffer>false</organismsDiffer>
    <experiments>3</experiments>
</comment>
<comment type="interaction">
    <interactant intactId="EBI-11952651">
        <id>Q7Z6R9</id>
    </interactant>
    <interactant intactId="EBI-10172290">
        <id>P60409</id>
        <label>KRTAP10-7</label>
    </interactant>
    <organismsDiffer>false</organismsDiffer>
    <experiments>5</experiments>
</comment>
<comment type="interaction">
    <interactant intactId="EBI-11952651">
        <id>Q7Z6R9</id>
    </interactant>
    <interactant intactId="EBI-10171774">
        <id>P60410</id>
        <label>KRTAP10-8</label>
    </interactant>
    <organismsDiffer>false</organismsDiffer>
    <experiments>5</experiments>
</comment>
<comment type="interaction">
    <interactant intactId="EBI-11952651">
        <id>Q7Z6R9</id>
    </interactant>
    <interactant intactId="EBI-1052037">
        <id>Q8IUC1</id>
        <label>KRTAP11-1</label>
    </interactant>
    <organismsDiffer>false</organismsDiffer>
    <experiments>3</experiments>
</comment>
<comment type="interaction">
    <interactant intactId="EBI-11952651">
        <id>Q7Z6R9</id>
    </interactant>
    <interactant intactId="EBI-11953334">
        <id>P60328</id>
        <label>KRTAP12-3</label>
    </interactant>
    <organismsDiffer>false</organismsDiffer>
    <experiments>3</experiments>
</comment>
<comment type="interaction">
    <interactant intactId="EBI-11952651">
        <id>Q7Z6R9</id>
    </interactant>
    <interactant intactId="EBI-11992140">
        <id>Q3LI76</id>
        <label>KRTAP15-1</label>
    </interactant>
    <organismsDiffer>false</organismsDiffer>
    <experiments>3</experiments>
</comment>
<comment type="interaction">
    <interactant intactId="EBI-11952651">
        <id>Q7Z6R9</id>
    </interactant>
    <interactant intactId="EBI-12196745">
        <id>Q3LHN2</id>
        <label>KRTAP19-2</label>
    </interactant>
    <organismsDiffer>false</organismsDiffer>
    <experiments>3</experiments>
</comment>
<comment type="interaction">
    <interactant intactId="EBI-11952651">
        <id>Q7Z6R9</id>
    </interactant>
    <interactant intactId="EBI-12805508">
        <id>Q3LI70</id>
        <label>KRTAP19-6</label>
    </interactant>
    <organismsDiffer>false</organismsDiffer>
    <experiments>3</experiments>
</comment>
<comment type="interaction">
    <interactant intactId="EBI-11952651">
        <id>Q7Z6R9</id>
    </interactant>
    <interactant intactId="EBI-10241353">
        <id>Q3SYF9</id>
        <label>KRTAP19-7</label>
    </interactant>
    <organismsDiffer>false</organismsDiffer>
    <experiments>3</experiments>
</comment>
<comment type="interaction">
    <interactant intactId="EBI-11952651">
        <id>Q7Z6R9</id>
    </interactant>
    <interactant intactId="EBI-14065470">
        <id>Q9BYR9</id>
        <label>KRTAP2-4</label>
    </interactant>
    <organismsDiffer>false</organismsDiffer>
    <experiments>3</experiments>
</comment>
<comment type="interaction">
    <interactant intactId="EBI-11952651">
        <id>Q7Z6R9</id>
    </interactant>
    <interactant intactId="EBI-3957672">
        <id>Q6PEX3</id>
        <label>KRTAP26-1</label>
    </interactant>
    <organismsDiffer>false</organismsDiffer>
    <experiments>3</experiments>
</comment>
<comment type="interaction">
    <interactant intactId="EBI-11952651">
        <id>Q7Z6R9</id>
    </interactant>
    <interactant intactId="EBI-12111050">
        <id>Q3LI64</id>
        <label>KRTAP6-1</label>
    </interactant>
    <organismsDiffer>false</organismsDiffer>
    <experiments>3</experiments>
</comment>
<comment type="interaction">
    <interactant intactId="EBI-11952651">
        <id>Q7Z6R9</id>
    </interactant>
    <interactant intactId="EBI-11962084">
        <id>Q3LI66</id>
        <label>KRTAP6-2</label>
    </interactant>
    <organismsDiffer>false</organismsDiffer>
    <experiments>5</experiments>
</comment>
<comment type="interaction">
    <interactant intactId="EBI-11952651">
        <id>Q7Z6R9</id>
    </interactant>
    <interactant intactId="EBI-22311199">
        <id>Q3LI67</id>
        <label>KRTAP6-3</label>
    </interactant>
    <organismsDiffer>false</organismsDiffer>
    <experiments>3</experiments>
</comment>
<comment type="interaction">
    <interactant intactId="EBI-11952651">
        <id>Q7Z6R9</id>
    </interactant>
    <interactant intactId="EBI-18394498">
        <id>Q8IUC3</id>
        <label>KRTAP7-1</label>
    </interactant>
    <organismsDiffer>false</organismsDiffer>
    <experiments>3</experiments>
</comment>
<comment type="interaction">
    <interactant intactId="EBI-11952651">
        <id>Q7Z6R9</id>
    </interactant>
    <interactant intactId="EBI-1044640">
        <id>Q9BYQ4</id>
        <label>KRTAP9-2</label>
    </interactant>
    <organismsDiffer>false</organismsDiffer>
    <experiments>5</experiments>
</comment>
<comment type="interaction">
    <interactant intactId="EBI-11952651">
        <id>Q7Z6R9</id>
    </interactant>
    <interactant intactId="EBI-1043191">
        <id>Q9BYQ3</id>
        <label>KRTAP9-3</label>
    </interactant>
    <organismsDiffer>false</organismsDiffer>
    <experiments>3</experiments>
</comment>
<comment type="interaction">
    <interactant intactId="EBI-11952651">
        <id>Q7Z6R9</id>
    </interactant>
    <interactant intactId="EBI-744248">
        <id>P40692</id>
        <label>MLH1</label>
    </interactant>
    <organismsDiffer>false</organismsDiffer>
    <experiments>5</experiments>
</comment>
<comment type="interaction">
    <interactant intactId="EBI-11952651">
        <id>Q7Z6R9</id>
    </interactant>
    <interactant intactId="EBI-536879">
        <id>O43482</id>
        <label>OIP5</label>
    </interactant>
    <organismsDiffer>false</organismsDiffer>
    <experiments>5</experiments>
</comment>
<comment type="interaction">
    <interactant intactId="EBI-11952651">
        <id>Q7Z6R9</id>
    </interactant>
    <interactant intactId="EBI-748265">
        <id>P78337</id>
        <label>PITX1</label>
    </interactant>
    <organismsDiffer>false</organismsDiffer>
    <experiments>3</experiments>
</comment>
<comment type="interaction">
    <interactant intactId="EBI-11952651">
        <id>Q7Z6R9</id>
    </interactant>
    <interactant intactId="EBI-949255">
        <id>Q58EX7</id>
        <label>PLEKHG4</label>
    </interactant>
    <organismsDiffer>false</organismsDiffer>
    <experiments>3</experiments>
</comment>
<comment type="interaction">
    <interactant intactId="EBI-11952651">
        <id>Q7Z6R9</id>
    </interactant>
    <interactant intactId="EBI-603350">
        <id>P28070</id>
        <label>PSMB4</label>
    </interactant>
    <organismsDiffer>false</organismsDiffer>
    <experiments>3</experiments>
</comment>
<comment type="interaction">
    <interactant intactId="EBI-11952651">
        <id>Q7Z6R9</id>
    </interactant>
    <interactant intactId="EBI-948156">
        <id>Q9Y4B4</id>
        <label>RAD54L2</label>
    </interactant>
    <organismsDiffer>false</organismsDiffer>
    <experiments>3</experiments>
</comment>
<comment type="interaction">
    <interactant intactId="EBI-11952651">
        <id>Q7Z6R9</id>
    </interactant>
    <interactant intactId="EBI-12372219">
        <id>O15304-2</id>
        <label>SIVA1</label>
    </interactant>
    <organismsDiffer>false</organismsDiffer>
    <experiments>3</experiments>
</comment>
<comment type="interaction">
    <interactant intactId="EBI-11952651">
        <id>Q7Z6R9</id>
    </interactant>
    <interactant intactId="EBI-10269374">
        <id>Q8ND83</id>
        <label>SLAIN1</label>
    </interactant>
    <organismsDiffer>false</organismsDiffer>
    <experiments>3</experiments>
</comment>
<comment type="interaction">
    <interactant intactId="EBI-11952651">
        <id>Q7Z6R9</id>
    </interactant>
    <interactant intactId="EBI-743976">
        <id>Q96LM6</id>
        <label>SPMIP9</label>
    </interactant>
    <organismsDiffer>false</organismsDiffer>
    <experiments>3</experiments>
</comment>
<comment type="interaction">
    <interactant intactId="EBI-11952651">
        <id>Q7Z6R9</id>
    </interactant>
    <interactant intactId="EBI-3866665">
        <id>O43609</id>
        <label>SPRY1</label>
    </interactant>
    <organismsDiffer>false</organismsDiffer>
    <experiments>3</experiments>
</comment>
<comment type="interaction">
    <interactant intactId="EBI-11952651">
        <id>Q7Z6R9</id>
    </interactant>
    <interactant intactId="EBI-11139477">
        <id>Q96N21</id>
        <label>TEPSIN</label>
    </interactant>
    <organismsDiffer>false</organismsDiffer>
    <experiments>3</experiments>
</comment>
<comment type="interaction">
    <interactant intactId="EBI-11952651">
        <id>Q7Z6R9</id>
    </interactant>
    <interactant intactId="EBI-11741437">
        <id>Q08117-2</id>
        <label>TLE5</label>
    </interactant>
    <organismsDiffer>false</organismsDiffer>
    <experiments>5</experiments>
</comment>
<comment type="interaction">
    <interactant intactId="EBI-11952651">
        <id>Q7Z6R9</id>
    </interactant>
    <interactant intactId="EBI-949753">
        <id>Q63HR2</id>
        <label>TNS2</label>
    </interactant>
    <organismsDiffer>false</organismsDiffer>
    <experiments>3</experiments>
</comment>
<comment type="interaction">
    <interactant intactId="EBI-11952651">
        <id>Q7Z6R9</id>
    </interactant>
    <interactant intactId="EBI-359224">
        <id>Q13077</id>
        <label>TRAF1</label>
    </interactant>
    <organismsDiffer>false</organismsDiffer>
    <experiments>3</experiments>
</comment>
<comment type="interaction">
    <interactant intactId="EBI-11952651">
        <id>Q7Z6R9</id>
    </interactant>
    <interactant intactId="EBI-5235829">
        <id>Q8IWZ5</id>
        <label>TRIM42</label>
    </interactant>
    <organismsDiffer>false</organismsDiffer>
    <experiments>3</experiments>
</comment>
<comment type="interaction">
    <interactant intactId="EBI-11952651">
        <id>Q7Z6R9</id>
    </interactant>
    <interactant intactId="EBI-12806590">
        <id>Q86WV8</id>
        <label>TSC1</label>
    </interactant>
    <organismsDiffer>false</organismsDiffer>
    <experiments>3</experiments>
</comment>
<comment type="interaction">
    <interactant intactId="EBI-11952651">
        <id>Q7Z6R9</id>
    </interactant>
    <interactant intactId="EBI-11975223">
        <id>Q70EL1-9</id>
        <label>USP54</label>
    </interactant>
    <organismsDiffer>false</organismsDiffer>
    <experiments>3</experiments>
</comment>
<comment type="interaction">
    <interactant intactId="EBI-11952651">
        <id>Q7Z6R9</id>
    </interactant>
    <interactant intactId="EBI-2559305">
        <id>A5D8V6</id>
        <label>VPS37C</label>
    </interactant>
    <organismsDiffer>false</organismsDiffer>
    <experiments>3</experiments>
</comment>
<comment type="interaction">
    <interactant intactId="EBI-11952651">
        <id>Q7Z6R9</id>
    </interactant>
    <interactant intactId="EBI-10188476">
        <id>A0A0C4DGF1</id>
        <label>ZBTB32</label>
    </interactant>
    <organismsDiffer>false</organismsDiffer>
    <experiments>3</experiments>
</comment>
<comment type="interaction">
    <interactant intactId="EBI-11952651">
        <id>Q7Z6R9</id>
    </interactant>
    <interactant intactId="EBI-12030590">
        <id>Q9H0C1</id>
        <label>ZMYND12</label>
    </interactant>
    <organismsDiffer>false</organismsDiffer>
    <experiments>3</experiments>
</comment>
<comment type="subcellular location">
    <subcellularLocation>
        <location evidence="9">Nucleus</location>
    </subcellularLocation>
</comment>
<comment type="tissue specificity">
    <text evidence="6">Highly expressed in brain, placenta, skeletal muscle, thymus, small intestine, and prostate, and expressed at lower levels in leukocyte, spleen, testis, ovary and colon. Barely detectable in heart, kidney, liver, lung or pancreas.</text>
</comment>
<comment type="similarity">
    <text evidence="4">Belongs to the AP-2 family.</text>
</comment>
<comment type="online information" name="Wikipedia">
    <link uri="https://en.wikipedia.org/wiki/Activating_protein_2"/>
    <text>Activating protein 2 entry</text>
</comment>
<reference evidence="9 10" key="1">
    <citation type="journal article" date="2002" name="Int. J. Biochem. Cell Biol.">
        <title>Cloning and characterization of a novel human transcription factor AP-2 beta like gene (TFAP2BL1).</title>
        <authorList>
            <person name="Cheng C."/>
            <person name="Ying K."/>
            <person name="Xu M."/>
            <person name="Zhao W."/>
            <person name="Zhou Z."/>
            <person name="Huang Y."/>
            <person name="Wang W."/>
            <person name="Xu J."/>
            <person name="Zeng L."/>
            <person name="Xie Y."/>
            <person name="Mao Y."/>
        </authorList>
    </citation>
    <scope>NUCLEOTIDE SEQUENCE [MRNA]</scope>
    <scope>TISSUE SPECIFICITY</scope>
</reference>
<reference evidence="11" key="2">
    <citation type="journal article" date="2003" name="Nature">
        <title>The DNA sequence and analysis of human chromosome 6.</title>
        <authorList>
            <person name="Mungall A.J."/>
            <person name="Palmer S.A."/>
            <person name="Sims S.K."/>
            <person name="Edwards C.A."/>
            <person name="Ashurst J.L."/>
            <person name="Wilming L."/>
            <person name="Jones M.C."/>
            <person name="Horton R."/>
            <person name="Hunt S.E."/>
            <person name="Scott C.E."/>
            <person name="Gilbert J.G.R."/>
            <person name="Clamp M.E."/>
            <person name="Bethel G."/>
            <person name="Milne S."/>
            <person name="Ainscough R."/>
            <person name="Almeida J.P."/>
            <person name="Ambrose K.D."/>
            <person name="Andrews T.D."/>
            <person name="Ashwell R.I.S."/>
            <person name="Babbage A.K."/>
            <person name="Bagguley C.L."/>
            <person name="Bailey J."/>
            <person name="Banerjee R."/>
            <person name="Barker D.J."/>
            <person name="Barlow K.F."/>
            <person name="Bates K."/>
            <person name="Beare D.M."/>
            <person name="Beasley H."/>
            <person name="Beasley O."/>
            <person name="Bird C.P."/>
            <person name="Blakey S.E."/>
            <person name="Bray-Allen S."/>
            <person name="Brook J."/>
            <person name="Brown A.J."/>
            <person name="Brown J.Y."/>
            <person name="Burford D.C."/>
            <person name="Burrill W."/>
            <person name="Burton J."/>
            <person name="Carder C."/>
            <person name="Carter N.P."/>
            <person name="Chapman J.C."/>
            <person name="Clark S.Y."/>
            <person name="Clark G."/>
            <person name="Clee C.M."/>
            <person name="Clegg S."/>
            <person name="Cobley V."/>
            <person name="Collier R.E."/>
            <person name="Collins J.E."/>
            <person name="Colman L.K."/>
            <person name="Corby N.R."/>
            <person name="Coville G.J."/>
            <person name="Culley K.M."/>
            <person name="Dhami P."/>
            <person name="Davies J."/>
            <person name="Dunn M."/>
            <person name="Earthrowl M.E."/>
            <person name="Ellington A.E."/>
            <person name="Evans K.A."/>
            <person name="Faulkner L."/>
            <person name="Francis M.D."/>
            <person name="Frankish A."/>
            <person name="Frankland J."/>
            <person name="French L."/>
            <person name="Garner P."/>
            <person name="Garnett J."/>
            <person name="Ghori M.J."/>
            <person name="Gilby L.M."/>
            <person name="Gillson C.J."/>
            <person name="Glithero R.J."/>
            <person name="Grafham D.V."/>
            <person name="Grant M."/>
            <person name="Gribble S."/>
            <person name="Griffiths C."/>
            <person name="Griffiths M.N.D."/>
            <person name="Hall R."/>
            <person name="Halls K.S."/>
            <person name="Hammond S."/>
            <person name="Harley J.L."/>
            <person name="Hart E.A."/>
            <person name="Heath P.D."/>
            <person name="Heathcott R."/>
            <person name="Holmes S.J."/>
            <person name="Howden P.J."/>
            <person name="Howe K.L."/>
            <person name="Howell G.R."/>
            <person name="Huckle E."/>
            <person name="Humphray S.J."/>
            <person name="Humphries M.D."/>
            <person name="Hunt A.R."/>
            <person name="Johnson C.M."/>
            <person name="Joy A.A."/>
            <person name="Kay M."/>
            <person name="Keenan S.J."/>
            <person name="Kimberley A.M."/>
            <person name="King A."/>
            <person name="Laird G.K."/>
            <person name="Langford C."/>
            <person name="Lawlor S."/>
            <person name="Leongamornlert D.A."/>
            <person name="Leversha M."/>
            <person name="Lloyd C.R."/>
            <person name="Lloyd D.M."/>
            <person name="Loveland J.E."/>
            <person name="Lovell J."/>
            <person name="Martin S."/>
            <person name="Mashreghi-Mohammadi M."/>
            <person name="Maslen G.L."/>
            <person name="Matthews L."/>
            <person name="McCann O.T."/>
            <person name="McLaren S.J."/>
            <person name="McLay K."/>
            <person name="McMurray A."/>
            <person name="Moore M.J.F."/>
            <person name="Mullikin J.C."/>
            <person name="Niblett D."/>
            <person name="Nickerson T."/>
            <person name="Novik K.L."/>
            <person name="Oliver K."/>
            <person name="Overton-Larty E.K."/>
            <person name="Parker A."/>
            <person name="Patel R."/>
            <person name="Pearce A.V."/>
            <person name="Peck A.I."/>
            <person name="Phillimore B.J.C.T."/>
            <person name="Phillips S."/>
            <person name="Plumb R.W."/>
            <person name="Porter K.M."/>
            <person name="Ramsey Y."/>
            <person name="Ranby S.A."/>
            <person name="Rice C.M."/>
            <person name="Ross M.T."/>
            <person name="Searle S.M."/>
            <person name="Sehra H.K."/>
            <person name="Sheridan E."/>
            <person name="Skuce C.D."/>
            <person name="Smith S."/>
            <person name="Smith M."/>
            <person name="Spraggon L."/>
            <person name="Squares S.L."/>
            <person name="Steward C.A."/>
            <person name="Sycamore N."/>
            <person name="Tamlyn-Hall G."/>
            <person name="Tester J."/>
            <person name="Theaker A.J."/>
            <person name="Thomas D.W."/>
            <person name="Thorpe A."/>
            <person name="Tracey A."/>
            <person name="Tromans A."/>
            <person name="Tubby B."/>
            <person name="Wall M."/>
            <person name="Wallis J.M."/>
            <person name="West A.P."/>
            <person name="White S.S."/>
            <person name="Whitehead S.L."/>
            <person name="Whittaker H."/>
            <person name="Wild A."/>
            <person name="Willey D.J."/>
            <person name="Wilmer T.E."/>
            <person name="Wood J.M."/>
            <person name="Wray P.W."/>
            <person name="Wyatt J.C."/>
            <person name="Young L."/>
            <person name="Younger R.M."/>
            <person name="Bentley D.R."/>
            <person name="Coulson A."/>
            <person name="Durbin R.M."/>
            <person name="Hubbard T."/>
            <person name="Sulston J.E."/>
            <person name="Dunham I."/>
            <person name="Rogers J."/>
            <person name="Beck S."/>
        </authorList>
    </citation>
    <scope>NUCLEOTIDE SEQUENCE [LARGE SCALE GENOMIC DNA]</scope>
</reference>
<reference key="3">
    <citation type="submission" date="2005-07" db="EMBL/GenBank/DDBJ databases">
        <authorList>
            <person name="Mural R.J."/>
            <person name="Istrail S."/>
            <person name="Sutton G.G."/>
            <person name="Florea L."/>
            <person name="Halpern A.L."/>
            <person name="Mobarry C.M."/>
            <person name="Lippert R."/>
            <person name="Walenz B."/>
            <person name="Shatkay H."/>
            <person name="Dew I."/>
            <person name="Miller J.R."/>
            <person name="Flanigan M.J."/>
            <person name="Edwards N.J."/>
            <person name="Bolanos R."/>
            <person name="Fasulo D."/>
            <person name="Halldorsson B.V."/>
            <person name="Hannenhalli S."/>
            <person name="Turner R."/>
            <person name="Yooseph S."/>
            <person name="Lu F."/>
            <person name="Nusskern D.R."/>
            <person name="Shue B.C."/>
            <person name="Zheng X.H."/>
            <person name="Zhong F."/>
            <person name="Delcher A.L."/>
            <person name="Huson D.H."/>
            <person name="Kravitz S.A."/>
            <person name="Mouchard L."/>
            <person name="Reinert K."/>
            <person name="Remington K.A."/>
            <person name="Clark A.G."/>
            <person name="Waterman M.S."/>
            <person name="Eichler E.E."/>
            <person name="Adams M.D."/>
            <person name="Hunkapiller M.W."/>
            <person name="Myers E.W."/>
            <person name="Venter J.C."/>
        </authorList>
    </citation>
    <scope>NUCLEOTIDE SEQUENCE [LARGE SCALE GENOMIC DNA]</scope>
</reference>
<reference evidence="9" key="4">
    <citation type="journal article" date="2006" name="Science">
        <title>The consensus coding sequences of human breast and colorectal cancers.</title>
        <authorList>
            <person name="Sjoeblom T."/>
            <person name="Jones S."/>
            <person name="Wood L.D."/>
            <person name="Parsons D.W."/>
            <person name="Lin J."/>
            <person name="Barber T.D."/>
            <person name="Mandelker D."/>
            <person name="Leary R.J."/>
            <person name="Ptak J."/>
            <person name="Silliman N."/>
            <person name="Szabo S."/>
            <person name="Buckhaults P."/>
            <person name="Farrell C."/>
            <person name="Meeh P."/>
            <person name="Markowitz S.D."/>
            <person name="Willis J."/>
            <person name="Dawson D."/>
            <person name="Willson J.K.V."/>
            <person name="Gazdar A.F."/>
            <person name="Hartigan J."/>
            <person name="Wu L."/>
            <person name="Liu C."/>
            <person name="Parmigiani G."/>
            <person name="Park B.H."/>
            <person name="Bachman K.E."/>
            <person name="Papadopoulos N."/>
            <person name="Vogelstein B."/>
            <person name="Kinzler K.W."/>
            <person name="Velculescu V.E."/>
        </authorList>
    </citation>
    <scope>VARIANT [LARGE SCALE ANALYSIS] PHE-214</scope>
</reference>
<organism>
    <name type="scientific">Homo sapiens</name>
    <name type="common">Human</name>
    <dbReference type="NCBI Taxonomy" id="9606"/>
    <lineage>
        <taxon>Eukaryota</taxon>
        <taxon>Metazoa</taxon>
        <taxon>Chordata</taxon>
        <taxon>Craniata</taxon>
        <taxon>Vertebrata</taxon>
        <taxon>Euteleostomi</taxon>
        <taxon>Mammalia</taxon>
        <taxon>Eutheria</taxon>
        <taxon>Euarchontoglires</taxon>
        <taxon>Primates</taxon>
        <taxon>Haplorrhini</taxon>
        <taxon>Catarrhini</taxon>
        <taxon>Hominidae</taxon>
        <taxon>Homo</taxon>
    </lineage>
</organism>
<proteinExistence type="evidence at protein level"/>
<feature type="chain" id="PRO_0000309513" description="Transcription factor AP-2-delta">
    <location>
        <begin position="1"/>
        <end position="452"/>
    </location>
</feature>
<feature type="region of interest" description="H-S-H (helix-span-helix), dimerization" evidence="4">
    <location>
        <begin position="280"/>
        <end position="410"/>
    </location>
</feature>
<feature type="region of interest" description="Disordered" evidence="5">
    <location>
        <begin position="416"/>
        <end position="452"/>
    </location>
</feature>
<feature type="compositionally biased region" description="Basic and acidic residues" evidence="5">
    <location>
        <begin position="429"/>
        <end position="452"/>
    </location>
</feature>
<feature type="modified residue" description="Phosphoserine; by PKA" evidence="2">
    <location>
        <position position="239"/>
    </location>
</feature>
<feature type="sequence variant" id="VAR_036975" description="In a breast cancer sample; somatic mutation." evidence="7">
    <original>V</original>
    <variation>F</variation>
    <location>
        <position position="214"/>
    </location>
</feature>
<feature type="sequence conflict" description="In Ref. 1; AAK16926." evidence="9" ref="1">
    <original>H</original>
    <variation>Y</variation>
    <location>
        <position position="16"/>
    </location>
</feature>
<feature type="sequence conflict" description="In Ref. 1; AAK16926." evidence="9" ref="1">
    <original>S</original>
    <variation>N</variation>
    <location>
        <position position="167"/>
    </location>
</feature>
<keyword id="KW-0010">Activator</keyword>
<keyword id="KW-0238">DNA-binding</keyword>
<keyword id="KW-0539">Nucleus</keyword>
<keyword id="KW-0597">Phosphoprotein</keyword>
<keyword id="KW-1267">Proteomics identification</keyword>
<keyword id="KW-1185">Reference proteome</keyword>
<keyword id="KW-0804">Transcription</keyword>
<keyword id="KW-0805">Transcription regulation</keyword>
<dbReference type="EMBL" id="AY028376">
    <property type="protein sequence ID" value="AAK16926.1"/>
    <property type="molecule type" value="mRNA"/>
</dbReference>
<dbReference type="EMBL" id="AL031224">
    <property type="status" value="NOT_ANNOTATED_CDS"/>
    <property type="molecule type" value="Genomic_DNA"/>
</dbReference>
<dbReference type="EMBL" id="CH471081">
    <property type="protein sequence ID" value="EAX04354.1"/>
    <property type="molecule type" value="Genomic_DNA"/>
</dbReference>
<dbReference type="CCDS" id="CCDS4933.1"/>
<dbReference type="RefSeq" id="NP_758438.2">
    <property type="nucleotide sequence ID" value="NM_172238.4"/>
</dbReference>
<dbReference type="SMR" id="Q7Z6R9"/>
<dbReference type="BioGRID" id="123749">
    <property type="interactions" value="112"/>
</dbReference>
<dbReference type="FunCoup" id="Q7Z6R9">
    <property type="interactions" value="132"/>
</dbReference>
<dbReference type="IntAct" id="Q7Z6R9">
    <property type="interactions" value="70"/>
</dbReference>
<dbReference type="STRING" id="9606.ENSP00000008391"/>
<dbReference type="iPTMnet" id="Q7Z6R9"/>
<dbReference type="PhosphoSitePlus" id="Q7Z6R9"/>
<dbReference type="BioMuta" id="TFAP2D"/>
<dbReference type="DMDM" id="74750179"/>
<dbReference type="jPOST" id="Q7Z6R9"/>
<dbReference type="MassIVE" id="Q7Z6R9"/>
<dbReference type="PaxDb" id="9606-ENSP00000008391"/>
<dbReference type="PeptideAtlas" id="Q7Z6R9"/>
<dbReference type="ProteomicsDB" id="69455"/>
<dbReference type="Pumba" id="Q7Z6R9"/>
<dbReference type="Antibodypedia" id="30864">
    <property type="antibodies" value="138 antibodies from 24 providers"/>
</dbReference>
<dbReference type="DNASU" id="83741"/>
<dbReference type="Ensembl" id="ENST00000008391.4">
    <property type="protein sequence ID" value="ENSP00000008391.4"/>
    <property type="gene ID" value="ENSG00000008197.5"/>
</dbReference>
<dbReference type="GeneID" id="83741"/>
<dbReference type="KEGG" id="hsa:83741"/>
<dbReference type="MANE-Select" id="ENST00000008391.4">
    <property type="protein sequence ID" value="ENSP00000008391.4"/>
    <property type="RefSeq nucleotide sequence ID" value="NM_172238.4"/>
    <property type="RefSeq protein sequence ID" value="NP_758438.2"/>
</dbReference>
<dbReference type="UCSC" id="uc003paf.4">
    <property type="organism name" value="human"/>
</dbReference>
<dbReference type="AGR" id="HGNC:15581"/>
<dbReference type="CTD" id="83741"/>
<dbReference type="DisGeNET" id="83741"/>
<dbReference type="GeneCards" id="TFAP2D"/>
<dbReference type="HGNC" id="HGNC:15581">
    <property type="gene designation" value="TFAP2D"/>
</dbReference>
<dbReference type="HPA" id="ENSG00000008197">
    <property type="expression patterns" value="Not detected"/>
</dbReference>
<dbReference type="MIM" id="610161">
    <property type="type" value="gene"/>
</dbReference>
<dbReference type="neXtProt" id="NX_Q7Z6R9"/>
<dbReference type="OpenTargets" id="ENSG00000008197"/>
<dbReference type="PharmGKB" id="PA37984"/>
<dbReference type="VEuPathDB" id="HostDB:ENSG00000008197"/>
<dbReference type="eggNOG" id="KOG3811">
    <property type="taxonomic scope" value="Eukaryota"/>
</dbReference>
<dbReference type="GeneTree" id="ENSGT00950000182848"/>
<dbReference type="HOGENOM" id="CLU_035175_5_0_1"/>
<dbReference type="InParanoid" id="Q7Z6R9"/>
<dbReference type="OMA" id="HYEFQHG"/>
<dbReference type="OrthoDB" id="6252992at2759"/>
<dbReference type="PAN-GO" id="Q7Z6R9">
    <property type="GO annotations" value="6 GO annotations based on evolutionary models"/>
</dbReference>
<dbReference type="PhylomeDB" id="Q7Z6R9"/>
<dbReference type="TreeFam" id="TF313718"/>
<dbReference type="PathwayCommons" id="Q7Z6R9"/>
<dbReference type="Reactome" id="R-HSA-8866904">
    <property type="pathway name" value="Negative regulation of activity of TFAP2 (AP-2) family transcription factors"/>
</dbReference>
<dbReference type="Reactome" id="R-HSA-8866907">
    <property type="pathway name" value="Activation of the TFAP2 (AP-2) family of transcription factors"/>
</dbReference>
<dbReference type="SignaLink" id="Q7Z6R9"/>
<dbReference type="SIGNOR" id="Q7Z6R9"/>
<dbReference type="BioGRID-ORCS" id="83741">
    <property type="hits" value="16 hits in 1092 CRISPR screens"/>
</dbReference>
<dbReference type="GenomeRNAi" id="83741"/>
<dbReference type="Pharos" id="Q7Z6R9">
    <property type="development level" value="Tdark"/>
</dbReference>
<dbReference type="PRO" id="PR:Q7Z6R9"/>
<dbReference type="Proteomes" id="UP000005640">
    <property type="component" value="Chromosome 6"/>
</dbReference>
<dbReference type="RNAct" id="Q7Z6R9">
    <property type="molecule type" value="protein"/>
</dbReference>
<dbReference type="Bgee" id="ENSG00000008197">
    <property type="expression patterns" value="Expressed in oocyte and 23 other cell types or tissues"/>
</dbReference>
<dbReference type="GO" id="GO:0000785">
    <property type="term" value="C:chromatin"/>
    <property type="evidence" value="ECO:0000247"/>
    <property type="project" value="NTNU_SB"/>
</dbReference>
<dbReference type="GO" id="GO:0005634">
    <property type="term" value="C:nucleus"/>
    <property type="evidence" value="ECO:0000318"/>
    <property type="project" value="GO_Central"/>
</dbReference>
<dbReference type="GO" id="GO:0005667">
    <property type="term" value="C:transcription regulator complex"/>
    <property type="evidence" value="ECO:0007669"/>
    <property type="project" value="Ensembl"/>
</dbReference>
<dbReference type="GO" id="GO:0001228">
    <property type="term" value="F:DNA-binding transcription activator activity, RNA polymerase II-specific"/>
    <property type="evidence" value="ECO:0000318"/>
    <property type="project" value="GO_Central"/>
</dbReference>
<dbReference type="GO" id="GO:0000981">
    <property type="term" value="F:DNA-binding transcription factor activity, RNA polymerase II-specific"/>
    <property type="evidence" value="ECO:0000247"/>
    <property type="project" value="NTNU_SB"/>
</dbReference>
<dbReference type="GO" id="GO:0000977">
    <property type="term" value="F:RNA polymerase II transcription regulatory region sequence-specific DNA binding"/>
    <property type="evidence" value="ECO:0000318"/>
    <property type="project" value="GO_Central"/>
</dbReference>
<dbReference type="GO" id="GO:0061379">
    <property type="term" value="P:inferior colliculus development"/>
    <property type="evidence" value="ECO:0007669"/>
    <property type="project" value="Ensembl"/>
</dbReference>
<dbReference type="GO" id="GO:0043524">
    <property type="term" value="P:negative regulation of neuron apoptotic process"/>
    <property type="evidence" value="ECO:0007669"/>
    <property type="project" value="Ensembl"/>
</dbReference>
<dbReference type="GO" id="GO:0045944">
    <property type="term" value="P:positive regulation of transcription by RNA polymerase II"/>
    <property type="evidence" value="ECO:0000318"/>
    <property type="project" value="GO_Central"/>
</dbReference>
<dbReference type="GO" id="GO:0042127">
    <property type="term" value="P:regulation of cell population proliferation"/>
    <property type="evidence" value="ECO:0000318"/>
    <property type="project" value="GO_Central"/>
</dbReference>
<dbReference type="GO" id="GO:0006366">
    <property type="term" value="P:transcription by RNA polymerase II"/>
    <property type="evidence" value="ECO:0007669"/>
    <property type="project" value="Ensembl"/>
</dbReference>
<dbReference type="InterPro" id="IPR004979">
    <property type="entry name" value="TF_AP2"/>
</dbReference>
<dbReference type="InterPro" id="IPR013854">
    <property type="entry name" value="TF_AP2_C"/>
</dbReference>
<dbReference type="PANTHER" id="PTHR10812">
    <property type="entry name" value="TRANSCRIPTION FACTOR AP-2"/>
    <property type="match status" value="1"/>
</dbReference>
<dbReference type="PANTHER" id="PTHR10812:SF5">
    <property type="entry name" value="TRANSCRIPTION FACTOR AP-2-DELTA"/>
    <property type="match status" value="1"/>
</dbReference>
<dbReference type="Pfam" id="PF03299">
    <property type="entry name" value="TF_AP-2"/>
    <property type="match status" value="1"/>
</dbReference>
<dbReference type="PRINTS" id="PR01748">
    <property type="entry name" value="AP2TNSCPFCT"/>
</dbReference>
<sequence length="452" mass="49578">MSTTFPGLVHDAEIRHDGSNSYRLMQLGCLESVANSTVAYSSSSPLTYSTTGTEFASPYFSTNHQYTPLHHQSFHYEFQHSHPAVTPDAYSLNSLHHSQQYYQQIHHGEPTDFINLHNARALKSSCLDEQRRELGCLDAYRRHDLSLMSHGSQYGMHPDQRLLPGPSLGLAAAGADDLQGSVEAQCGLVLNGQGGVIRRGGTCVVNPTDLFCSVPGRLSLLSSTSKYKVTIAEVKRRLSPPECLNASLLGGILRRAKSKNGGRCLREKLDRLGLNLPAGRRKAANVTLLTSLVEGEALHLARDFGYTCETEFPAKAVGEHLARQHMEQKEQTARKKMILATKQICKEFQDLLSQDRSPLGSSRPTPILDLDIQRHLTHFSLITHGFGTPAICAALSTFQTVLSEMLNYLEKHTTHKNGGAADSGQGHANSEKAPLRKTSEAAVKEGKTEKTD</sequence>
<name>AP2D_HUMAN</name>